<comment type="catalytic activity">
    <reaction evidence="1">
        <text>acetaldehyde + NAD(+) + CoA = acetyl-CoA + NADH + H(+)</text>
        <dbReference type="Rhea" id="RHEA:23288"/>
        <dbReference type="ChEBI" id="CHEBI:15343"/>
        <dbReference type="ChEBI" id="CHEBI:15378"/>
        <dbReference type="ChEBI" id="CHEBI:57287"/>
        <dbReference type="ChEBI" id="CHEBI:57288"/>
        <dbReference type="ChEBI" id="CHEBI:57540"/>
        <dbReference type="ChEBI" id="CHEBI:57945"/>
        <dbReference type="EC" id="1.2.1.10"/>
    </reaction>
</comment>
<comment type="similarity">
    <text evidence="1">Belongs to the acetaldehyde dehydrogenase family.</text>
</comment>
<reference key="1">
    <citation type="submission" date="2009-03" db="EMBL/GenBank/DDBJ databases">
        <title>Comparison of the complete genome sequences of Rhodococcus erythropolis PR4 and Rhodococcus opacus B4.</title>
        <authorList>
            <person name="Takarada H."/>
            <person name="Sekine M."/>
            <person name="Hosoyama A."/>
            <person name="Yamada R."/>
            <person name="Fujisawa T."/>
            <person name="Omata S."/>
            <person name="Shimizu A."/>
            <person name="Tsukatani N."/>
            <person name="Tanikawa S."/>
            <person name="Fujita N."/>
            <person name="Harayama S."/>
        </authorList>
    </citation>
    <scope>NUCLEOTIDE SEQUENCE [LARGE SCALE GENOMIC DNA]</scope>
    <source>
        <strain>B4</strain>
    </source>
</reference>
<evidence type="ECO:0000255" key="1">
    <source>
        <dbReference type="HAMAP-Rule" id="MF_01657"/>
    </source>
</evidence>
<sequence length="292" mass="30285">MSRKSAAIIGSGNIGTDLMYKLLRSEHVEPRFMVGIDPGSEGLARARQEGLEASAGGLDWLLAQPELPDIVFEATSAKIHAAAAPRYAAAGITAIDLTPASVGPYVVPAVNLDAHLGAPNVNMVSCAGQATIPILYAINEVADASYGEIVAAIASHSAGPGTRQNLSEFSEKTGKALAQVAGADRAKAISVINPAEPPMNMRDTVYAKVRNPDPAAIEKAVIDMVAKVQQYVPGYSLRLVDVDGDLVTVMLEVVGAGDFLPTYAGNLDIITAAAVQVADVMAQQNLVQGAAQ</sequence>
<protein>
    <recommendedName>
        <fullName evidence="1">Acetaldehyde dehydrogenase 4</fullName>
        <ecNumber evidence="1">1.2.1.10</ecNumber>
    </recommendedName>
    <alternativeName>
        <fullName evidence="1">Acetaldehyde dehydrogenase [acetylating] 4</fullName>
    </alternativeName>
</protein>
<organism>
    <name type="scientific">Rhodococcus opacus (strain B4)</name>
    <dbReference type="NCBI Taxonomy" id="632772"/>
    <lineage>
        <taxon>Bacteria</taxon>
        <taxon>Bacillati</taxon>
        <taxon>Actinomycetota</taxon>
        <taxon>Actinomycetes</taxon>
        <taxon>Mycobacteriales</taxon>
        <taxon>Nocardiaceae</taxon>
        <taxon>Rhodococcus</taxon>
    </lineage>
</organism>
<keyword id="KW-0058">Aromatic hydrocarbons catabolism</keyword>
<keyword id="KW-0520">NAD</keyword>
<keyword id="KW-0560">Oxidoreductase</keyword>
<proteinExistence type="inferred from homology"/>
<name>ACDH4_RHOOB</name>
<feature type="chain" id="PRO_0000387723" description="Acetaldehyde dehydrogenase 4">
    <location>
        <begin position="1"/>
        <end position="292"/>
    </location>
</feature>
<feature type="active site" description="Acyl-thioester intermediate" evidence="1">
    <location>
        <position position="126"/>
    </location>
</feature>
<feature type="binding site" evidence="1">
    <location>
        <begin position="11"/>
        <end position="14"/>
    </location>
    <ligand>
        <name>NAD(+)</name>
        <dbReference type="ChEBI" id="CHEBI:57540"/>
    </ligand>
</feature>
<feature type="binding site" evidence="1">
    <location>
        <begin position="157"/>
        <end position="165"/>
    </location>
    <ligand>
        <name>NAD(+)</name>
        <dbReference type="ChEBI" id="CHEBI:57540"/>
    </ligand>
</feature>
<feature type="binding site" evidence="1">
    <location>
        <position position="266"/>
    </location>
    <ligand>
        <name>NAD(+)</name>
        <dbReference type="ChEBI" id="CHEBI:57540"/>
    </ligand>
</feature>
<accession>C1AVG3</accession>
<gene>
    <name type="ordered locus">ROP_54060</name>
</gene>
<dbReference type="EC" id="1.2.1.10" evidence="1"/>
<dbReference type="EMBL" id="AP011115">
    <property type="protein sequence ID" value="BAH53653.1"/>
    <property type="molecule type" value="Genomic_DNA"/>
</dbReference>
<dbReference type="RefSeq" id="WP_015889154.1">
    <property type="nucleotide sequence ID" value="NC_012522.1"/>
</dbReference>
<dbReference type="SMR" id="C1AVG3"/>
<dbReference type="STRING" id="632772.ROP_54060"/>
<dbReference type="KEGG" id="rop:ROP_54060"/>
<dbReference type="PATRIC" id="fig|632772.20.peg.5643"/>
<dbReference type="HOGENOM" id="CLU_062208_0_0_11"/>
<dbReference type="OrthoDB" id="9786743at2"/>
<dbReference type="Proteomes" id="UP000002212">
    <property type="component" value="Chromosome"/>
</dbReference>
<dbReference type="GO" id="GO:0008774">
    <property type="term" value="F:acetaldehyde dehydrogenase (acetylating) activity"/>
    <property type="evidence" value="ECO:0007669"/>
    <property type="project" value="UniProtKB-UniRule"/>
</dbReference>
<dbReference type="GO" id="GO:0051287">
    <property type="term" value="F:NAD binding"/>
    <property type="evidence" value="ECO:0007669"/>
    <property type="project" value="UniProtKB-UniRule"/>
</dbReference>
<dbReference type="GO" id="GO:0009056">
    <property type="term" value="P:catabolic process"/>
    <property type="evidence" value="ECO:0007669"/>
    <property type="project" value="UniProtKB-KW"/>
</dbReference>
<dbReference type="CDD" id="cd23933">
    <property type="entry name" value="ALDH_C"/>
    <property type="match status" value="1"/>
</dbReference>
<dbReference type="Gene3D" id="3.30.360.10">
    <property type="entry name" value="Dihydrodipicolinate Reductase, domain 2"/>
    <property type="match status" value="1"/>
</dbReference>
<dbReference type="Gene3D" id="3.40.50.720">
    <property type="entry name" value="NAD(P)-binding Rossmann-like Domain"/>
    <property type="match status" value="1"/>
</dbReference>
<dbReference type="HAMAP" id="MF_01657">
    <property type="entry name" value="Ac_ald_DH_ac"/>
    <property type="match status" value="1"/>
</dbReference>
<dbReference type="InterPro" id="IPR003361">
    <property type="entry name" value="Acetaldehyde_dehydrogenase"/>
</dbReference>
<dbReference type="InterPro" id="IPR015426">
    <property type="entry name" value="Acetylaldehyde_DH_C"/>
</dbReference>
<dbReference type="InterPro" id="IPR036291">
    <property type="entry name" value="NAD(P)-bd_dom_sf"/>
</dbReference>
<dbReference type="InterPro" id="IPR000534">
    <property type="entry name" value="Semialdehyde_DH_NAD-bd"/>
</dbReference>
<dbReference type="NCBIfam" id="TIGR03215">
    <property type="entry name" value="ac_ald_DH_ac"/>
    <property type="match status" value="1"/>
</dbReference>
<dbReference type="NCBIfam" id="NF006157">
    <property type="entry name" value="PRK08300.1"/>
    <property type="match status" value="1"/>
</dbReference>
<dbReference type="Pfam" id="PF09290">
    <property type="entry name" value="AcetDehyd-dimer"/>
    <property type="match status" value="1"/>
</dbReference>
<dbReference type="Pfam" id="PF01118">
    <property type="entry name" value="Semialdhyde_dh"/>
    <property type="match status" value="1"/>
</dbReference>
<dbReference type="PIRSF" id="PIRSF015689">
    <property type="entry name" value="Actaldh_dh_actl"/>
    <property type="match status" value="1"/>
</dbReference>
<dbReference type="SMART" id="SM00859">
    <property type="entry name" value="Semialdhyde_dh"/>
    <property type="match status" value="1"/>
</dbReference>
<dbReference type="SUPFAM" id="SSF55347">
    <property type="entry name" value="Glyceraldehyde-3-phosphate dehydrogenase-like, C-terminal domain"/>
    <property type="match status" value="1"/>
</dbReference>
<dbReference type="SUPFAM" id="SSF51735">
    <property type="entry name" value="NAD(P)-binding Rossmann-fold domains"/>
    <property type="match status" value="1"/>
</dbReference>